<protein>
    <recommendedName>
        <fullName>Non-histone protein 10</fullName>
    </recommendedName>
    <alternativeName>
        <fullName>High mobility group protein 2</fullName>
    </alternativeName>
</protein>
<proteinExistence type="evidence at protein level"/>
<evidence type="ECO:0000255" key="1">
    <source>
        <dbReference type="PROSITE-ProRule" id="PRU00267"/>
    </source>
</evidence>
<evidence type="ECO:0000256" key="2">
    <source>
        <dbReference type="SAM" id="MobiDB-lite"/>
    </source>
</evidence>
<evidence type="ECO:0000269" key="3">
    <source>
    </source>
</evidence>
<evidence type="ECO:0000269" key="4">
    <source>
    </source>
</evidence>
<evidence type="ECO:0000269" key="5">
    <source>
    </source>
</evidence>
<evidence type="ECO:0007744" key="6">
    <source>
    </source>
</evidence>
<organism>
    <name type="scientific">Saccharomyces cerevisiae (strain ATCC 204508 / S288c)</name>
    <name type="common">Baker's yeast</name>
    <dbReference type="NCBI Taxonomy" id="559292"/>
    <lineage>
        <taxon>Eukaryota</taxon>
        <taxon>Fungi</taxon>
        <taxon>Dikarya</taxon>
        <taxon>Ascomycota</taxon>
        <taxon>Saccharomycotina</taxon>
        <taxon>Saccharomycetes</taxon>
        <taxon>Saccharomycetales</taxon>
        <taxon>Saccharomycetaceae</taxon>
        <taxon>Saccharomyces</taxon>
    </lineage>
</organism>
<comment type="function">
    <text>Probably involved in transcription regulation via its interaction with the INO80 complex, a chromatin remodeling complex.</text>
</comment>
<comment type="subunit">
    <text evidence="3">Component of the chromatin-remodeling INO80 complex, at least composed of ARP4, ARP5, ARP8, RVB1, RVB2, TAF14, NHP10, IES1, IES3, IES4, IES6, ACT1, IES2, IES5 and INO80.</text>
</comment>
<comment type="interaction">
    <interactant intactId="EBI-12010">
        <id>Q03435</id>
    </interactant>
    <interactant intactId="EBI-22775">
        <id>P43579</id>
        <label>IES1</label>
    </interactant>
    <organismsDiffer>false</organismsDiffer>
    <experiments>5</experiments>
</comment>
<comment type="interaction">
    <interactant intactId="EBI-12010">
        <id>Q03435</id>
    </interactant>
    <interactant intactId="EBI-22617">
        <id>P40060</id>
        <label>IES5</label>
    </interactant>
    <organismsDiffer>false</organismsDiffer>
    <experiments>5</experiments>
</comment>
<comment type="interaction">
    <interactant intactId="EBI-12010">
        <id>Q03435</id>
    </interactant>
    <interactant intactId="EBI-24019">
        <id>P53115</id>
        <label>INO80</label>
    </interactant>
    <organismsDiffer>false</organismsDiffer>
    <experiments>11</experiments>
</comment>
<comment type="subcellular location">
    <subcellularLocation>
        <location evidence="1 4">Nucleus</location>
    </subcellularLocation>
</comment>
<comment type="miscellaneous">
    <text evidence="5">Present with 1750 molecules/cell in log phase SD medium.</text>
</comment>
<sequence>MSVEEKKRRLEELKDQNVVLGLAIQRSRLSVKRLKLEYGVLLERLESRIELDPELNCEDPLPTLASFKQELLTKPFRKSKTKRHKVKERDPNMPKRPTNAYLLYCEMNKERIRQNGSLDVTRDLAEGWKNLNEQDRKPYYKLYSEDRERYQMEMEIYNKKISNIDADDDKEENEQKIKNNEEGSSTKVADSKGGEDGSLVSSN</sequence>
<gene>
    <name type="primary">NHP10</name>
    <name type="synonym">HMO2</name>
    <name type="ordered locus">YDL002C</name>
    <name type="ORF">YD8119.05C</name>
</gene>
<name>NHP10_YEAST</name>
<keyword id="KW-0007">Acetylation</keyword>
<keyword id="KW-0238">DNA-binding</keyword>
<keyword id="KW-0539">Nucleus</keyword>
<keyword id="KW-1185">Reference proteome</keyword>
<keyword id="KW-0804">Transcription</keyword>
<keyword id="KW-0805">Transcription regulation</keyword>
<accession>Q03435</accession>
<accession>D6VRY6</accession>
<dbReference type="EMBL" id="Z48008">
    <property type="protein sequence ID" value="CAA88059.1"/>
    <property type="molecule type" value="Genomic_DNA"/>
</dbReference>
<dbReference type="EMBL" id="BK006938">
    <property type="protein sequence ID" value="DAA11846.1"/>
    <property type="molecule type" value="Genomic_DNA"/>
</dbReference>
<dbReference type="PIR" id="S50980">
    <property type="entry name" value="S50980"/>
</dbReference>
<dbReference type="RefSeq" id="NP_010282.3">
    <property type="nucleotide sequence ID" value="NM_001180061.3"/>
</dbReference>
<dbReference type="SMR" id="Q03435"/>
<dbReference type="BioGRID" id="32052">
    <property type="interactions" value="695"/>
</dbReference>
<dbReference type="ComplexPortal" id="CPX-863">
    <property type="entry name" value="INO80 chromatin remodeling complex"/>
</dbReference>
<dbReference type="DIP" id="DIP-1387N"/>
<dbReference type="FunCoup" id="Q03435">
    <property type="interactions" value="215"/>
</dbReference>
<dbReference type="IntAct" id="Q03435">
    <property type="interactions" value="36"/>
</dbReference>
<dbReference type="MINT" id="Q03435"/>
<dbReference type="STRING" id="4932.YDL002C"/>
<dbReference type="iPTMnet" id="Q03435"/>
<dbReference type="PaxDb" id="4932-YDL002C"/>
<dbReference type="PeptideAtlas" id="Q03435"/>
<dbReference type="EnsemblFungi" id="YDL002C_mRNA">
    <property type="protein sequence ID" value="YDL002C"/>
    <property type="gene ID" value="YDL002C"/>
</dbReference>
<dbReference type="GeneID" id="851562"/>
<dbReference type="KEGG" id="sce:YDL002C"/>
<dbReference type="AGR" id="SGD:S000002160"/>
<dbReference type="SGD" id="S000002160">
    <property type="gene designation" value="NHP10"/>
</dbReference>
<dbReference type="VEuPathDB" id="FungiDB:YDL002C"/>
<dbReference type="eggNOG" id="KOG0381">
    <property type="taxonomic scope" value="Eukaryota"/>
</dbReference>
<dbReference type="HOGENOM" id="CLU_066251_0_1_1"/>
<dbReference type="InParanoid" id="Q03435"/>
<dbReference type="OMA" id="KDPELCY"/>
<dbReference type="OrthoDB" id="10070927at2759"/>
<dbReference type="BioCyc" id="YEAST:G3O-29433-MONOMER"/>
<dbReference type="Reactome" id="R-SCE-140342">
    <property type="pathway name" value="Apoptosis induced DNA fragmentation"/>
</dbReference>
<dbReference type="Reactome" id="R-SCE-163282">
    <property type="pathway name" value="Mitochondrial transcription initiation"/>
</dbReference>
<dbReference type="Reactome" id="R-SCE-5620971">
    <property type="pathway name" value="Pyroptosis"/>
</dbReference>
<dbReference type="Reactome" id="R-SCE-5686938">
    <property type="pathway name" value="Regulation of TLR by endogenous ligand"/>
</dbReference>
<dbReference type="Reactome" id="R-SCE-6798695">
    <property type="pathway name" value="Neutrophil degranulation"/>
</dbReference>
<dbReference type="Reactome" id="R-SCE-9837999">
    <property type="pathway name" value="Mitochondrial protein degradation"/>
</dbReference>
<dbReference type="BioGRID-ORCS" id="851562">
    <property type="hits" value="0 hits in 10 CRISPR screens"/>
</dbReference>
<dbReference type="PRO" id="PR:Q03435"/>
<dbReference type="Proteomes" id="UP000002311">
    <property type="component" value="Chromosome IV"/>
</dbReference>
<dbReference type="RNAct" id="Q03435">
    <property type="molecule type" value="protein"/>
</dbReference>
<dbReference type="GO" id="GO:0031011">
    <property type="term" value="C:Ino80 complex"/>
    <property type="evidence" value="ECO:0000314"/>
    <property type="project" value="SGD"/>
</dbReference>
<dbReference type="GO" id="GO:0005634">
    <property type="term" value="C:nucleus"/>
    <property type="evidence" value="ECO:0000314"/>
    <property type="project" value="ComplexPortal"/>
</dbReference>
<dbReference type="GO" id="GO:0045027">
    <property type="term" value="F:DNA end binding"/>
    <property type="evidence" value="ECO:0000314"/>
    <property type="project" value="SGD"/>
</dbReference>
<dbReference type="GO" id="GO:0000404">
    <property type="term" value="F:heteroduplex DNA loop binding"/>
    <property type="evidence" value="ECO:0000314"/>
    <property type="project" value="SGD"/>
</dbReference>
<dbReference type="GO" id="GO:0006338">
    <property type="term" value="P:chromatin remodeling"/>
    <property type="evidence" value="ECO:0000314"/>
    <property type="project" value="SGD"/>
</dbReference>
<dbReference type="GO" id="GO:0006281">
    <property type="term" value="P:DNA repair"/>
    <property type="evidence" value="ECO:0000303"/>
    <property type="project" value="ComplexPortal"/>
</dbReference>
<dbReference type="GO" id="GO:0006302">
    <property type="term" value="P:double-strand break repair"/>
    <property type="evidence" value="ECO:0000315"/>
    <property type="project" value="SGD"/>
</dbReference>
<dbReference type="GO" id="GO:0006355">
    <property type="term" value="P:regulation of DNA-templated transcription"/>
    <property type="evidence" value="ECO:0000303"/>
    <property type="project" value="ComplexPortal"/>
</dbReference>
<dbReference type="GO" id="GO:0000722">
    <property type="term" value="P:telomere maintenance via recombination"/>
    <property type="evidence" value="ECO:0000316"/>
    <property type="project" value="SGD"/>
</dbReference>
<dbReference type="CDD" id="cd22016">
    <property type="entry name" value="HMG-box_NHP10-like"/>
    <property type="match status" value="1"/>
</dbReference>
<dbReference type="FunFam" id="1.10.30.10:FF:000065">
    <property type="entry name" value="Nhp10p"/>
    <property type="match status" value="1"/>
</dbReference>
<dbReference type="Gene3D" id="1.10.30.10">
    <property type="entry name" value="High mobility group box domain"/>
    <property type="match status" value="1"/>
</dbReference>
<dbReference type="InterPro" id="IPR009071">
    <property type="entry name" value="HMG_box_dom"/>
</dbReference>
<dbReference type="InterPro" id="IPR036910">
    <property type="entry name" value="HMG_box_dom_sf"/>
</dbReference>
<dbReference type="InterPro" id="IPR050342">
    <property type="entry name" value="HMGB"/>
</dbReference>
<dbReference type="PANTHER" id="PTHR48112">
    <property type="entry name" value="HIGH MOBILITY GROUP PROTEIN DSP1"/>
    <property type="match status" value="1"/>
</dbReference>
<dbReference type="PANTHER" id="PTHR48112:SF13">
    <property type="entry name" value="NON-HISTONE PROTEIN 10"/>
    <property type="match status" value="1"/>
</dbReference>
<dbReference type="Pfam" id="PF00505">
    <property type="entry name" value="HMG_box"/>
    <property type="match status" value="1"/>
</dbReference>
<dbReference type="SMART" id="SM00398">
    <property type="entry name" value="HMG"/>
    <property type="match status" value="1"/>
</dbReference>
<dbReference type="SUPFAM" id="SSF47095">
    <property type="entry name" value="HMG-box"/>
    <property type="match status" value="1"/>
</dbReference>
<dbReference type="PROSITE" id="PS50118">
    <property type="entry name" value="HMG_BOX_2"/>
    <property type="match status" value="1"/>
</dbReference>
<feature type="initiator methionine" description="Removed" evidence="6">
    <location>
        <position position="1"/>
    </location>
</feature>
<feature type="chain" id="PRO_0000048567" description="Non-histone protein 10">
    <location>
        <begin position="2"/>
        <end position="203"/>
    </location>
</feature>
<feature type="DNA-binding region" description="HMG box" evidence="1">
    <location>
        <begin position="94"/>
        <end position="158"/>
    </location>
</feature>
<feature type="region of interest" description="Disordered" evidence="2">
    <location>
        <begin position="78"/>
        <end position="97"/>
    </location>
</feature>
<feature type="region of interest" description="Disordered" evidence="2">
    <location>
        <begin position="161"/>
        <end position="203"/>
    </location>
</feature>
<feature type="modified residue" description="N-acetylserine" evidence="6">
    <location>
        <position position="2"/>
    </location>
</feature>
<reference key="1">
    <citation type="journal article" date="1997" name="Nature">
        <title>The nucleotide sequence of Saccharomyces cerevisiae chromosome IV.</title>
        <authorList>
            <person name="Jacq C."/>
            <person name="Alt-Moerbe J."/>
            <person name="Andre B."/>
            <person name="Arnold W."/>
            <person name="Bahr A."/>
            <person name="Ballesta J.P.G."/>
            <person name="Bargues M."/>
            <person name="Baron L."/>
            <person name="Becker A."/>
            <person name="Biteau N."/>
            <person name="Bloecker H."/>
            <person name="Blugeon C."/>
            <person name="Boskovic J."/>
            <person name="Brandt P."/>
            <person name="Brueckner M."/>
            <person name="Buitrago M.J."/>
            <person name="Coster F."/>
            <person name="Delaveau T."/>
            <person name="del Rey F."/>
            <person name="Dujon B."/>
            <person name="Eide L.G."/>
            <person name="Garcia-Cantalejo J.M."/>
            <person name="Goffeau A."/>
            <person name="Gomez-Peris A."/>
            <person name="Granotier C."/>
            <person name="Hanemann V."/>
            <person name="Hankeln T."/>
            <person name="Hoheisel J.D."/>
            <person name="Jaeger W."/>
            <person name="Jimenez A."/>
            <person name="Jonniaux J.-L."/>
            <person name="Kraemer C."/>
            <person name="Kuester H."/>
            <person name="Laamanen P."/>
            <person name="Legros Y."/>
            <person name="Louis E.J."/>
            <person name="Moeller-Rieker S."/>
            <person name="Monnet A."/>
            <person name="Moro M."/>
            <person name="Mueller-Auer S."/>
            <person name="Nussbaumer B."/>
            <person name="Paricio N."/>
            <person name="Paulin L."/>
            <person name="Perea J."/>
            <person name="Perez-Alonso M."/>
            <person name="Perez-Ortin J.E."/>
            <person name="Pohl T.M."/>
            <person name="Prydz H."/>
            <person name="Purnelle B."/>
            <person name="Rasmussen S.W."/>
            <person name="Remacha M.A."/>
            <person name="Revuelta J.L."/>
            <person name="Rieger M."/>
            <person name="Salom D."/>
            <person name="Saluz H.P."/>
            <person name="Saiz J.E."/>
            <person name="Saren A.-M."/>
            <person name="Schaefer M."/>
            <person name="Scharfe M."/>
            <person name="Schmidt E.R."/>
            <person name="Schneider C."/>
            <person name="Scholler P."/>
            <person name="Schwarz S."/>
            <person name="Soler-Mira A."/>
            <person name="Urrestarazu L.A."/>
            <person name="Verhasselt P."/>
            <person name="Vissers S."/>
            <person name="Voet M."/>
            <person name="Volckaert G."/>
            <person name="Wagner G."/>
            <person name="Wambutt R."/>
            <person name="Wedler E."/>
            <person name="Wedler H."/>
            <person name="Woelfl S."/>
            <person name="Harris D.E."/>
            <person name="Bowman S."/>
            <person name="Brown D."/>
            <person name="Churcher C.M."/>
            <person name="Connor R."/>
            <person name="Dedman K."/>
            <person name="Gentles S."/>
            <person name="Hamlin N."/>
            <person name="Hunt S."/>
            <person name="Jones L."/>
            <person name="McDonald S."/>
            <person name="Murphy L.D."/>
            <person name="Niblett D."/>
            <person name="Odell C."/>
            <person name="Oliver K."/>
            <person name="Rajandream M.A."/>
            <person name="Richards C."/>
            <person name="Shore L."/>
            <person name="Walsh S.V."/>
            <person name="Barrell B.G."/>
            <person name="Dietrich F.S."/>
            <person name="Mulligan J.T."/>
            <person name="Allen E."/>
            <person name="Araujo R."/>
            <person name="Aviles E."/>
            <person name="Berno A."/>
            <person name="Carpenter J."/>
            <person name="Chen E."/>
            <person name="Cherry J.M."/>
            <person name="Chung E."/>
            <person name="Duncan M."/>
            <person name="Hunicke-Smith S."/>
            <person name="Hyman R.W."/>
            <person name="Komp C."/>
            <person name="Lashkari D."/>
            <person name="Lew H."/>
            <person name="Lin D."/>
            <person name="Mosedale D."/>
            <person name="Nakahara K."/>
            <person name="Namath A."/>
            <person name="Oefner P."/>
            <person name="Oh C."/>
            <person name="Petel F.X."/>
            <person name="Roberts D."/>
            <person name="Schramm S."/>
            <person name="Schroeder M."/>
            <person name="Shogren T."/>
            <person name="Shroff N."/>
            <person name="Winant A."/>
            <person name="Yelton M.A."/>
            <person name="Botstein D."/>
            <person name="Davis R.W."/>
            <person name="Johnston M."/>
            <person name="Andrews S."/>
            <person name="Brinkman R."/>
            <person name="Cooper J."/>
            <person name="Ding H."/>
            <person name="Du Z."/>
            <person name="Favello A."/>
            <person name="Fulton L."/>
            <person name="Gattung S."/>
            <person name="Greco T."/>
            <person name="Hallsworth K."/>
            <person name="Hawkins J."/>
            <person name="Hillier L.W."/>
            <person name="Jier M."/>
            <person name="Johnson D."/>
            <person name="Johnston L."/>
            <person name="Kirsten J."/>
            <person name="Kucaba T."/>
            <person name="Langston Y."/>
            <person name="Latreille P."/>
            <person name="Le T."/>
            <person name="Mardis E."/>
            <person name="Menezes S."/>
            <person name="Miller N."/>
            <person name="Nhan M."/>
            <person name="Pauley A."/>
            <person name="Peluso D."/>
            <person name="Rifkin L."/>
            <person name="Riles L."/>
            <person name="Taich A."/>
            <person name="Trevaskis E."/>
            <person name="Vignati D."/>
            <person name="Wilcox L."/>
            <person name="Wohldman P."/>
            <person name="Vaudin M."/>
            <person name="Wilson R."/>
            <person name="Waterston R."/>
            <person name="Albermann K."/>
            <person name="Hani J."/>
            <person name="Heumann K."/>
            <person name="Kleine K."/>
            <person name="Mewes H.-W."/>
            <person name="Zollner A."/>
            <person name="Zaccaria P."/>
        </authorList>
    </citation>
    <scope>NUCLEOTIDE SEQUENCE [LARGE SCALE GENOMIC DNA]</scope>
    <source>
        <strain>ATCC 204508 / S288c</strain>
    </source>
</reference>
<reference key="2">
    <citation type="journal article" date="2014" name="G3 (Bethesda)">
        <title>The reference genome sequence of Saccharomyces cerevisiae: Then and now.</title>
        <authorList>
            <person name="Engel S.R."/>
            <person name="Dietrich F.S."/>
            <person name="Fisk D.G."/>
            <person name="Binkley G."/>
            <person name="Balakrishnan R."/>
            <person name="Costanzo M.C."/>
            <person name="Dwight S.S."/>
            <person name="Hitz B.C."/>
            <person name="Karra K."/>
            <person name="Nash R.S."/>
            <person name="Weng S."/>
            <person name="Wong E.D."/>
            <person name="Lloyd P."/>
            <person name="Skrzypek M.S."/>
            <person name="Miyasato S.R."/>
            <person name="Simison M."/>
            <person name="Cherry J.M."/>
        </authorList>
    </citation>
    <scope>GENOME REANNOTATION</scope>
    <source>
        <strain>ATCC 204508 / S288c</strain>
    </source>
</reference>
<reference key="3">
    <citation type="journal article" date="1996" name="J. Biol. Chem.">
        <title>Characterization of a high mobility group 1/2 homolog in yeast.</title>
        <authorList>
            <person name="Lu J."/>
            <person name="Kobayashi R."/>
            <person name="Brill S.J."/>
        </authorList>
    </citation>
    <scope>IDENTIFICATION</scope>
</reference>
<reference key="4">
    <citation type="journal article" date="2003" name="Mol. Cell">
        <title>Involvement of actin-related proteins in ATP-dependent chromatin remodeling.</title>
        <authorList>
            <person name="Shen X."/>
            <person name="Ranallo R."/>
            <person name="Choi E."/>
            <person name="Wu C."/>
        </authorList>
    </citation>
    <scope>IDENTIFICATION IN THE INO80 COMPLEX</scope>
    <scope>IDENTIFICATION BY MASS SPECTROMETRY</scope>
</reference>
<reference key="5">
    <citation type="journal article" date="2003" name="Nature">
        <title>Global analysis of protein localization in budding yeast.</title>
        <authorList>
            <person name="Huh W.-K."/>
            <person name="Falvo J.V."/>
            <person name="Gerke L.C."/>
            <person name="Carroll A.S."/>
            <person name="Howson R.W."/>
            <person name="Weissman J.S."/>
            <person name="O'Shea E.K."/>
        </authorList>
    </citation>
    <scope>SUBCELLULAR LOCATION [LARGE SCALE ANALYSIS]</scope>
</reference>
<reference key="6">
    <citation type="journal article" date="2003" name="Nature">
        <title>Global analysis of protein expression in yeast.</title>
        <authorList>
            <person name="Ghaemmaghami S."/>
            <person name="Huh W.-K."/>
            <person name="Bower K."/>
            <person name="Howson R.W."/>
            <person name="Belle A."/>
            <person name="Dephoure N."/>
            <person name="O'Shea E.K."/>
            <person name="Weissman J.S."/>
        </authorList>
    </citation>
    <scope>LEVEL OF PROTEIN EXPRESSION [LARGE SCALE ANALYSIS]</scope>
</reference>
<reference key="7">
    <citation type="journal article" date="2012" name="Proc. Natl. Acad. Sci. U.S.A.">
        <title>N-terminal acetylome analyses and functional insights of the N-terminal acetyltransferase NatB.</title>
        <authorList>
            <person name="Van Damme P."/>
            <person name="Lasa M."/>
            <person name="Polevoda B."/>
            <person name="Gazquez C."/>
            <person name="Elosegui-Artola A."/>
            <person name="Kim D.S."/>
            <person name="De Juan-Pardo E."/>
            <person name="Demeyer K."/>
            <person name="Hole K."/>
            <person name="Larrea E."/>
            <person name="Timmerman E."/>
            <person name="Prieto J."/>
            <person name="Arnesen T."/>
            <person name="Sherman F."/>
            <person name="Gevaert K."/>
            <person name="Aldabe R."/>
        </authorList>
    </citation>
    <scope>ACETYLATION [LARGE SCALE ANALYSIS] AT SER-2</scope>
    <scope>CLEAVAGE OF INITIATOR METHIONINE [LARGE SCALE ANALYSIS]</scope>
    <scope>IDENTIFICATION BY MASS SPECTROMETRY [LARGE SCALE ANALYSIS]</scope>
</reference>